<sequence>MSIDKSYCGFIAIVGRPNVGKSTLLNKLLGQKISITSRKAQTTRHRIVGIHTEGAYQAIYVDTPGLHMEEKRAINRLMNKAASSSIGDVELVIFVVEGTRWTPDDEMVLNKLRDGKAPVILAVNKVDNVQEKADLLPHLQFLASQMNFLDIVPISAETGLNVDTIAAIVRKHLPEATHHFPEDYITDRSQRFMASEIIREKLMRFLGAELPYSVTVEIERFVSNERGGYDINGLILVEREGQKKMVIGNKGAKIKTIGIEARKDMQEMFEAPVHLELWVKVKSGWADDERALRSLGYVDDL</sequence>
<reference key="1">
    <citation type="journal article" date="2009" name="PLoS Genet.">
        <title>Organised genome dynamics in the Escherichia coli species results in highly diverse adaptive paths.</title>
        <authorList>
            <person name="Touchon M."/>
            <person name="Hoede C."/>
            <person name="Tenaillon O."/>
            <person name="Barbe V."/>
            <person name="Baeriswyl S."/>
            <person name="Bidet P."/>
            <person name="Bingen E."/>
            <person name="Bonacorsi S."/>
            <person name="Bouchier C."/>
            <person name="Bouvet O."/>
            <person name="Calteau A."/>
            <person name="Chiapello H."/>
            <person name="Clermont O."/>
            <person name="Cruveiller S."/>
            <person name="Danchin A."/>
            <person name="Diard M."/>
            <person name="Dossat C."/>
            <person name="Karoui M.E."/>
            <person name="Frapy E."/>
            <person name="Garry L."/>
            <person name="Ghigo J.M."/>
            <person name="Gilles A.M."/>
            <person name="Johnson J."/>
            <person name="Le Bouguenec C."/>
            <person name="Lescat M."/>
            <person name="Mangenot S."/>
            <person name="Martinez-Jehanne V."/>
            <person name="Matic I."/>
            <person name="Nassif X."/>
            <person name="Oztas S."/>
            <person name="Petit M.A."/>
            <person name="Pichon C."/>
            <person name="Rouy Z."/>
            <person name="Ruf C.S."/>
            <person name="Schneider D."/>
            <person name="Tourret J."/>
            <person name="Vacherie B."/>
            <person name="Vallenet D."/>
            <person name="Medigue C."/>
            <person name="Rocha E.P.C."/>
            <person name="Denamur E."/>
        </authorList>
    </citation>
    <scope>NUCLEOTIDE SEQUENCE [LARGE SCALE GENOMIC DNA]</scope>
    <source>
        <strain>S88 / ExPEC</strain>
    </source>
</reference>
<accession>B7MIQ1</accession>
<feature type="chain" id="PRO_1000121318" description="GTPase Era">
    <location>
        <begin position="1"/>
        <end position="301"/>
    </location>
</feature>
<feature type="domain" description="Era-type G" evidence="2">
    <location>
        <begin position="7"/>
        <end position="175"/>
    </location>
</feature>
<feature type="domain" description="KH type-2" evidence="1">
    <location>
        <begin position="206"/>
        <end position="283"/>
    </location>
</feature>
<feature type="region of interest" description="G1" evidence="2">
    <location>
        <begin position="15"/>
        <end position="22"/>
    </location>
</feature>
<feature type="region of interest" description="G2" evidence="2">
    <location>
        <begin position="41"/>
        <end position="45"/>
    </location>
</feature>
<feature type="region of interest" description="G3" evidence="2">
    <location>
        <begin position="62"/>
        <end position="65"/>
    </location>
</feature>
<feature type="region of interest" description="G4" evidence="2">
    <location>
        <begin position="124"/>
        <end position="127"/>
    </location>
</feature>
<feature type="region of interest" description="G5" evidence="2">
    <location>
        <begin position="154"/>
        <end position="156"/>
    </location>
</feature>
<feature type="binding site" evidence="1">
    <location>
        <begin position="15"/>
        <end position="22"/>
    </location>
    <ligand>
        <name>GTP</name>
        <dbReference type="ChEBI" id="CHEBI:37565"/>
    </ligand>
</feature>
<feature type="binding site" evidence="1">
    <location>
        <begin position="62"/>
        <end position="66"/>
    </location>
    <ligand>
        <name>GTP</name>
        <dbReference type="ChEBI" id="CHEBI:37565"/>
    </ligand>
</feature>
<feature type="binding site" evidence="1">
    <location>
        <begin position="124"/>
        <end position="127"/>
    </location>
    <ligand>
        <name>GTP</name>
        <dbReference type="ChEBI" id="CHEBI:37565"/>
    </ligand>
</feature>
<dbReference type="EMBL" id="CU928161">
    <property type="protein sequence ID" value="CAR04003.1"/>
    <property type="molecule type" value="Genomic_DNA"/>
</dbReference>
<dbReference type="RefSeq" id="WP_000020737.1">
    <property type="nucleotide sequence ID" value="NC_011742.1"/>
</dbReference>
<dbReference type="SMR" id="B7MIQ1"/>
<dbReference type="GeneID" id="93774525"/>
<dbReference type="KEGG" id="ecz:ECS88_2739"/>
<dbReference type="HOGENOM" id="CLU_038009_1_2_6"/>
<dbReference type="Proteomes" id="UP000000747">
    <property type="component" value="Chromosome"/>
</dbReference>
<dbReference type="GO" id="GO:0005829">
    <property type="term" value="C:cytosol"/>
    <property type="evidence" value="ECO:0007669"/>
    <property type="project" value="TreeGrafter"/>
</dbReference>
<dbReference type="GO" id="GO:0005886">
    <property type="term" value="C:plasma membrane"/>
    <property type="evidence" value="ECO:0007669"/>
    <property type="project" value="UniProtKB-SubCell"/>
</dbReference>
<dbReference type="GO" id="GO:0005525">
    <property type="term" value="F:GTP binding"/>
    <property type="evidence" value="ECO:0007669"/>
    <property type="project" value="UniProtKB-UniRule"/>
</dbReference>
<dbReference type="GO" id="GO:0003924">
    <property type="term" value="F:GTPase activity"/>
    <property type="evidence" value="ECO:0007669"/>
    <property type="project" value="UniProtKB-UniRule"/>
</dbReference>
<dbReference type="GO" id="GO:0043024">
    <property type="term" value="F:ribosomal small subunit binding"/>
    <property type="evidence" value="ECO:0007669"/>
    <property type="project" value="TreeGrafter"/>
</dbReference>
<dbReference type="GO" id="GO:0070181">
    <property type="term" value="F:small ribosomal subunit rRNA binding"/>
    <property type="evidence" value="ECO:0007669"/>
    <property type="project" value="UniProtKB-UniRule"/>
</dbReference>
<dbReference type="GO" id="GO:0000028">
    <property type="term" value="P:ribosomal small subunit assembly"/>
    <property type="evidence" value="ECO:0007669"/>
    <property type="project" value="TreeGrafter"/>
</dbReference>
<dbReference type="CDD" id="cd04163">
    <property type="entry name" value="Era"/>
    <property type="match status" value="1"/>
</dbReference>
<dbReference type="CDD" id="cd22534">
    <property type="entry name" value="KH-II_Era"/>
    <property type="match status" value="1"/>
</dbReference>
<dbReference type="FunFam" id="3.30.300.20:FF:000003">
    <property type="entry name" value="GTPase Era"/>
    <property type="match status" value="1"/>
</dbReference>
<dbReference type="FunFam" id="3.40.50.300:FF:000094">
    <property type="entry name" value="GTPase Era"/>
    <property type="match status" value="1"/>
</dbReference>
<dbReference type="Gene3D" id="3.30.300.20">
    <property type="match status" value="1"/>
</dbReference>
<dbReference type="Gene3D" id="3.40.50.300">
    <property type="entry name" value="P-loop containing nucleotide triphosphate hydrolases"/>
    <property type="match status" value="1"/>
</dbReference>
<dbReference type="HAMAP" id="MF_00367">
    <property type="entry name" value="GTPase_Era"/>
    <property type="match status" value="1"/>
</dbReference>
<dbReference type="InterPro" id="IPR030388">
    <property type="entry name" value="G_ERA_dom"/>
</dbReference>
<dbReference type="InterPro" id="IPR006073">
    <property type="entry name" value="GTP-bd"/>
</dbReference>
<dbReference type="InterPro" id="IPR005662">
    <property type="entry name" value="GTPase_Era-like"/>
</dbReference>
<dbReference type="InterPro" id="IPR015946">
    <property type="entry name" value="KH_dom-like_a/b"/>
</dbReference>
<dbReference type="InterPro" id="IPR004044">
    <property type="entry name" value="KH_dom_type_2"/>
</dbReference>
<dbReference type="InterPro" id="IPR009019">
    <property type="entry name" value="KH_sf_prok-type"/>
</dbReference>
<dbReference type="InterPro" id="IPR027417">
    <property type="entry name" value="P-loop_NTPase"/>
</dbReference>
<dbReference type="InterPro" id="IPR005225">
    <property type="entry name" value="Small_GTP-bd"/>
</dbReference>
<dbReference type="NCBIfam" id="TIGR00436">
    <property type="entry name" value="era"/>
    <property type="match status" value="1"/>
</dbReference>
<dbReference type="NCBIfam" id="NF000908">
    <property type="entry name" value="PRK00089.1"/>
    <property type="match status" value="1"/>
</dbReference>
<dbReference type="NCBIfam" id="TIGR00231">
    <property type="entry name" value="small_GTP"/>
    <property type="match status" value="1"/>
</dbReference>
<dbReference type="PANTHER" id="PTHR42698">
    <property type="entry name" value="GTPASE ERA"/>
    <property type="match status" value="1"/>
</dbReference>
<dbReference type="PANTHER" id="PTHR42698:SF1">
    <property type="entry name" value="GTPASE ERA, MITOCHONDRIAL"/>
    <property type="match status" value="1"/>
</dbReference>
<dbReference type="Pfam" id="PF07650">
    <property type="entry name" value="KH_2"/>
    <property type="match status" value="1"/>
</dbReference>
<dbReference type="Pfam" id="PF01926">
    <property type="entry name" value="MMR_HSR1"/>
    <property type="match status" value="1"/>
</dbReference>
<dbReference type="SUPFAM" id="SSF52540">
    <property type="entry name" value="P-loop containing nucleoside triphosphate hydrolases"/>
    <property type="match status" value="1"/>
</dbReference>
<dbReference type="SUPFAM" id="SSF54814">
    <property type="entry name" value="Prokaryotic type KH domain (KH-domain type II)"/>
    <property type="match status" value="1"/>
</dbReference>
<dbReference type="PROSITE" id="PS51713">
    <property type="entry name" value="G_ERA"/>
    <property type="match status" value="1"/>
</dbReference>
<dbReference type="PROSITE" id="PS50823">
    <property type="entry name" value="KH_TYPE_2"/>
    <property type="match status" value="1"/>
</dbReference>
<proteinExistence type="inferred from homology"/>
<keyword id="KW-0997">Cell inner membrane</keyword>
<keyword id="KW-1003">Cell membrane</keyword>
<keyword id="KW-0963">Cytoplasm</keyword>
<keyword id="KW-0342">GTP-binding</keyword>
<keyword id="KW-0472">Membrane</keyword>
<keyword id="KW-0547">Nucleotide-binding</keyword>
<keyword id="KW-1185">Reference proteome</keyword>
<keyword id="KW-0690">Ribosome biogenesis</keyword>
<keyword id="KW-0694">RNA-binding</keyword>
<keyword id="KW-0699">rRNA-binding</keyword>
<gene>
    <name evidence="1" type="primary">era</name>
    <name type="ordered locus">ECS88_2739</name>
</gene>
<protein>
    <recommendedName>
        <fullName evidence="1">GTPase Era</fullName>
    </recommendedName>
</protein>
<evidence type="ECO:0000255" key="1">
    <source>
        <dbReference type="HAMAP-Rule" id="MF_00367"/>
    </source>
</evidence>
<evidence type="ECO:0000255" key="2">
    <source>
        <dbReference type="PROSITE-ProRule" id="PRU01050"/>
    </source>
</evidence>
<name>ERA_ECO45</name>
<organism>
    <name type="scientific">Escherichia coli O45:K1 (strain S88 / ExPEC)</name>
    <dbReference type="NCBI Taxonomy" id="585035"/>
    <lineage>
        <taxon>Bacteria</taxon>
        <taxon>Pseudomonadati</taxon>
        <taxon>Pseudomonadota</taxon>
        <taxon>Gammaproteobacteria</taxon>
        <taxon>Enterobacterales</taxon>
        <taxon>Enterobacteriaceae</taxon>
        <taxon>Escherichia</taxon>
    </lineage>
</organism>
<comment type="function">
    <text evidence="1">An essential GTPase that binds both GDP and GTP, with rapid nucleotide exchange. Plays a role in 16S rRNA processing and 30S ribosomal subunit biogenesis and possibly also in cell cycle regulation and energy metabolism.</text>
</comment>
<comment type="subunit">
    <text evidence="1">Monomer.</text>
</comment>
<comment type="subcellular location">
    <subcellularLocation>
        <location>Cytoplasm</location>
    </subcellularLocation>
    <subcellularLocation>
        <location evidence="1">Cell inner membrane</location>
        <topology evidence="1">Peripheral membrane protein</topology>
    </subcellularLocation>
</comment>
<comment type="similarity">
    <text evidence="1 2">Belongs to the TRAFAC class TrmE-Era-EngA-EngB-Septin-like GTPase superfamily. Era GTPase family.</text>
</comment>